<sequence>MSTSNLFNTVPFGKNVLNHKIVLSPMTRFRADDNGVPLSYMKTFYAQRASVRGTLLVTDAVAICPRTKGFPNVPGIWNKDQIAAWKEVVDEVHSKGSFIWLQLWATGRAADLEALTSQGLKLESSSEVPVAPGEPTPRALDEDEIQQYILDYVQGAKNAVHGAGFDGVEIHGANGFLVDQFLQSSCNRRTDQWGGSIENRSRFGLEITRGVVDAVGHDRVGMKLSPWSTFQGMGTMDDLVPQFEHFITCLREMDIAYLHLANSRWVEEEDPSIRTHPDFHNQTFVQMWGKKRPILLAGGYDPDSARRLVDQTYSDRNNVLVVFGRHYISNPDLPFRLRMGIALQKYNRDTFYIPCSGEGYVDYPFCKEYLDQADEAAVAG</sequence>
<protein>
    <recommendedName>
        <fullName evidence="16">Probable inactive dehydrogenase easA</fullName>
    </recommendedName>
    <alternativeName>
        <fullName evidence="16">Ergot alkaloid biosynthesis protein A</fullName>
    </alternativeName>
</protein>
<gene>
    <name evidence="16" type="primary">easA</name>
    <name evidence="15" type="synonym">cpox3</name>
    <name type="ORF">CPUR_04084</name>
</gene>
<proteinExistence type="inferred from homology"/>
<reference key="1">
    <citation type="submission" date="2011-06" db="EMBL/GenBank/DDBJ databases">
        <authorList>
            <person name="Florea S."/>
            <person name="Oeser B."/>
            <person name="Tudzynski P."/>
            <person name="Schardl C.L."/>
        </authorList>
    </citation>
    <scope>NUCLEOTIDE SEQUENCE [GENOMIC DNA]</scope>
    <source>
        <strain>20.1</strain>
    </source>
</reference>
<reference key="2">
    <citation type="journal article" date="2013" name="PLoS Genet.">
        <title>Plant-symbiotic fungi as chemical engineers: Multi-genome analysis of the Clavicipitaceae reveals dynamics of alkaloid loci.</title>
        <authorList>
            <person name="Schardl C.L."/>
            <person name="Young C.A."/>
            <person name="Hesse U."/>
            <person name="Amyotte S.G."/>
            <person name="Andreeva K."/>
            <person name="Calie P.J."/>
            <person name="Fleetwood D.J."/>
            <person name="Haws D.C."/>
            <person name="Moore N."/>
            <person name="Oeser B."/>
            <person name="Panaccione D.G."/>
            <person name="Schweri K.K."/>
            <person name="Voisey C.R."/>
            <person name="Farman M.L."/>
            <person name="Jaromczyk J.W."/>
            <person name="Roe B.A."/>
            <person name="O'Sullivan D.M."/>
            <person name="Scott B."/>
            <person name="Tudzynski P."/>
            <person name="An Z."/>
            <person name="Arnaoudova E.G."/>
            <person name="Bullock C.T."/>
            <person name="Charlton N.D."/>
            <person name="Chen L."/>
            <person name="Cox M."/>
            <person name="Dinkins R.D."/>
            <person name="Florea S."/>
            <person name="Glenn A.E."/>
            <person name="Gordon A."/>
            <person name="Gueldener U."/>
            <person name="Harris D.R."/>
            <person name="Hollin W."/>
            <person name="Jaromczyk J."/>
            <person name="Johnson R.D."/>
            <person name="Khan A.K."/>
            <person name="Leistner E."/>
            <person name="Leuchtmann A."/>
            <person name="Li C."/>
            <person name="Liu J."/>
            <person name="Liu J."/>
            <person name="Liu M."/>
            <person name="Mace W."/>
            <person name="Machado C."/>
            <person name="Nagabhyru P."/>
            <person name="Pan J."/>
            <person name="Schmid J."/>
            <person name="Sugawara K."/>
            <person name="Steiner U."/>
            <person name="Takach J.E."/>
            <person name="Tanaka E."/>
            <person name="Webb J.S."/>
            <person name="Wilson E.V."/>
            <person name="Wiseman J.L."/>
            <person name="Yoshida R."/>
            <person name="Zeng Z."/>
        </authorList>
    </citation>
    <scope>NUCLEOTIDE SEQUENCE [LARGE SCALE GENOMIC DNA]</scope>
    <source>
        <strain>20.1</strain>
    </source>
</reference>
<reference key="3">
    <citation type="journal article" date="2001" name="Appl. Microbiol. Biotechnol.">
        <title>Biotechnology and genetics of ergot alkaloids.</title>
        <authorList>
            <person name="Tudzynski P."/>
            <person name="Correia T."/>
            <person name="Keller U."/>
        </authorList>
    </citation>
    <scope>BIOTECHNOLOGY</scope>
    <source>
        <strain>P1 / 1029/N5</strain>
    </source>
</reference>
<reference key="4">
    <citation type="journal article" date="2003" name="Chem. Biol.">
        <title>Molecular cloning and analysis of the ergopeptine assembly system in the ergot fungus Claviceps purpurea.</title>
        <authorList>
            <person name="Correia T."/>
            <person name="Grammel N."/>
            <person name="Ortel I."/>
            <person name="Keller U."/>
            <person name="Tudzynski P."/>
        </authorList>
    </citation>
    <scope>FUNCTION</scope>
</reference>
<reference key="5">
    <citation type="journal article" date="2004" name="Fungal Genet. Biol.">
        <title>The determinant step in ergot alkaloid biosynthesis by an endophyte of perennial ryegrass.</title>
        <authorList>
            <person name="Wang J."/>
            <person name="Machado C."/>
            <person name="Panaccione D.G."/>
            <person name="Tsai H.-F."/>
            <person name="Schardl C.L."/>
        </authorList>
    </citation>
    <scope>FUNCTION</scope>
    <source>
        <strain>ATCC 20102 / Farmitalia FI 32/17</strain>
    </source>
</reference>
<reference key="6">
    <citation type="journal article" date="2005" name="Phytochemistry">
        <title>The ergot alkaloid gene cluster in Claviceps purpurea: extension of the cluster sequence and intra species evolution.</title>
        <authorList>
            <person name="Haarmann T."/>
            <person name="Machado C."/>
            <person name="Lubbe Y."/>
            <person name="Correia T."/>
            <person name="Schardl C.L."/>
            <person name="Panaccione D.G."/>
            <person name="Tudzynski P."/>
        </authorList>
    </citation>
    <scope>FUNCTION</scope>
    <scope>IDENTIFICATION IN THE EAS CLUSTER</scope>
</reference>
<reference key="7">
    <citation type="journal article" date="2006" name="ChemBioChem">
        <title>Identification of the cytochrome P450 monooxygenase that bridges the clavine and ergoline alkaloid pathways.</title>
        <authorList>
            <person name="Haarmann T."/>
            <person name="Ortel I."/>
            <person name="Tudzynski P."/>
            <person name="Keller U."/>
        </authorList>
    </citation>
    <scope>FUNCTION</scope>
    <source>
        <strain>P1 / 1029/N5</strain>
    </source>
</reference>
<reference key="8">
    <citation type="journal article" date="2007" name="Appl. Environ. Microbiol.">
        <title>A complex ergovaline gene cluster in epichloe endophytes of grasses.</title>
        <authorList>
            <person name="Fleetwood D.J."/>
            <person name="Scott B."/>
            <person name="Lane G.A."/>
            <person name="Tanaka A."/>
            <person name="Johnson R.D."/>
        </authorList>
    </citation>
    <scope>FUNCTION</scope>
</reference>
<reference key="9">
    <citation type="journal article" date="2007" name="Appl. Environ. Microbiol.">
        <title>Comparison of ergot alkaloid biosynthesis gene clusters in Claviceps species indicates loss of late pathway steps in evolution of C. fusiformis.</title>
        <authorList>
            <person name="Lorenz N."/>
            <person name="Wilson E.V."/>
            <person name="Machado C."/>
            <person name="Schardl C.L."/>
            <person name="Tudzynski P."/>
        </authorList>
    </citation>
    <scope>FUNCTION</scope>
</reference>
<reference key="10">
    <citation type="journal article" date="2008" name="Fungal Genet. Biol.">
        <title>Use of a nonhomologous end joining deficient strain (Deltaku70) of the ergot fungus Claviceps purpurea for identification of a nonribosomal peptide synthetase gene involved in ergotamine biosynthesis.</title>
        <authorList>
            <person name="Haarmann T."/>
            <person name="Lorenz N."/>
            <person name="Tudzynski P."/>
        </authorList>
    </citation>
    <scope>FUNCTION</scope>
</reference>
<reference key="11">
    <citation type="journal article" date="2009" name="J. Biol. Chem.">
        <title>Combinatorial assembly of simple and complex D-lysergic acid alkaloid peptide classes in the ergot fungus Claviceps purpurea.</title>
        <authorList>
            <person name="Ortel I."/>
            <person name="Keller U."/>
        </authorList>
    </citation>
    <scope>FUNCTION</scope>
</reference>
<reference key="12">
    <citation type="journal article" date="2010" name="Appl. Environ. Microbiol.">
        <title>Alkaloid cluster gene ccsA of the ergot fungus Claviceps purpurea encodes chanoclavine I synthase, a flavin adenine dinucleotide-containing oxidoreductase mediating the transformation of N-methyl-dimethylallyltryptophan to chanoclavine I.</title>
        <authorList>
            <person name="Lorenz N."/>
            <person name="Olsovska J."/>
            <person name="Sulc M."/>
            <person name="Tudzynski P."/>
        </authorList>
    </citation>
    <scope>FUNCTION</scope>
</reference>
<reference key="13">
    <citation type="journal article" date="2010" name="J. Am. Chem. Soc.">
        <title>Controlling a structural branch point in ergot alkaloid biosynthesis.</title>
        <authorList>
            <person name="Cheng J.Z."/>
            <person name="Coyle C.M."/>
            <person name="Panaccione D.G."/>
            <person name="O'Connor S.E."/>
        </authorList>
    </citation>
    <scope>FUNCTION</scope>
    <source>
        <strain>ATCC 20102 / Farmitalia FI 32/17</strain>
    </source>
</reference>
<reference key="14">
    <citation type="journal article" date="2011" name="Curr. Genet.">
        <title>Ergot cluster-encoded catalase is required for synthesis of chanoclavine-I in Aspergillus fumigatus.</title>
        <authorList>
            <person name="Goetz K.E."/>
            <person name="Coyle C.M."/>
            <person name="Cheng J.Z."/>
            <person name="O'Connor S.E."/>
            <person name="Panaccione D.G."/>
        </authorList>
    </citation>
    <scope>FUNCTION</scope>
</reference>
<reference key="15">
    <citation type="journal article" date="2011" name="Org. Biomol. Chem.">
        <title>New insights into ergot alkaloid biosynthesis in Claviceps purpurea: an agroclavine synthase EasG catalyses, via a non-enzymatic adduct with reduced glutathione, the conversion of chanoclavine-I aldehyde to agroclavine.</title>
        <authorList>
            <person name="Matuschek M."/>
            <person name="Wallwey C."/>
            <person name="Xie X."/>
            <person name="Li S.M."/>
        </authorList>
    </citation>
    <scope>FUNCTION</scope>
</reference>
<reference key="16">
    <citation type="journal article" date="2014" name="Chem. Biol.">
        <title>Cyclolization of D-lysergic acid alkaloid peptides.</title>
        <authorList>
            <person name="Havemann J."/>
            <person name="Vogel D."/>
            <person name="Loll B."/>
            <person name="Keller U."/>
        </authorList>
    </citation>
    <scope>FUNCTION</scope>
</reference>
<evidence type="ECO:0000250" key="1">
    <source>
        <dbReference type="UniProtKB" id="Q02899"/>
    </source>
</evidence>
<evidence type="ECO:0000250" key="2">
    <source>
        <dbReference type="UniProtKB" id="Q4WZ70"/>
    </source>
</evidence>
<evidence type="ECO:0000250" key="3">
    <source>
        <dbReference type="UniProtKB" id="Q50EL0"/>
    </source>
</evidence>
<evidence type="ECO:0000269" key="4">
    <source>
    </source>
</evidence>
<evidence type="ECO:0000269" key="5">
    <source>
    </source>
</evidence>
<evidence type="ECO:0000269" key="6">
    <source>
    </source>
</evidence>
<evidence type="ECO:0000269" key="7">
    <source>
    </source>
</evidence>
<evidence type="ECO:0000269" key="8">
    <source>
    </source>
</evidence>
<evidence type="ECO:0000269" key="9">
    <source>
    </source>
</evidence>
<evidence type="ECO:0000269" key="10">
    <source>
    </source>
</evidence>
<evidence type="ECO:0000269" key="11">
    <source>
    </source>
</evidence>
<evidence type="ECO:0000269" key="12">
    <source>
    </source>
</evidence>
<evidence type="ECO:0000269" key="13">
    <source>
    </source>
</evidence>
<evidence type="ECO:0000269" key="14">
    <source>
    </source>
</evidence>
<evidence type="ECO:0000303" key="15">
    <source>
    </source>
</evidence>
<evidence type="ECO:0000303" key="16">
    <source>
    </source>
</evidence>
<evidence type="ECO:0000305" key="17"/>
<evidence type="ECO:0000305" key="18">
    <source>
    </source>
</evidence>
<evidence type="ECO:0000305" key="19">
    <source>
    </source>
</evidence>
<comment type="function">
    <text evidence="3 4 5 6 7 8 9 10 11 12 13 14 18 19">Probable inactive dehydrogenase; part of the gene cluster that mediates the biosynthesis of fungal ergot alkaloid (PubMed:14700635, PubMed:14732265, PubMed:15904941, PubMed:17308187, PubMed:17720822). DmaW catalyzes the first step of ergot alkaloid biosynthesis by condensing dimethylallyl diphosphate (DMAP) and tryptophan to form 4-dimethylallyl-L-tryptophan (PubMed:14732265). The second step is catalyzed by the methyltransferase easF that methylates 4-dimethylallyl-L-tryptophan in the presence of S-adenosyl-L-methionine, resulting in the formation of 4-dimethylallyl-L-abrine (By similarity). The catalase easC and the FAD-dependent oxidoreductase easE then transform 4-dimethylallyl-L-abrine to chanoclavine-I which is further oxidized by easD in the presence of NAD(+), resulting in the formation of chanoclavine-I aldehyde (PubMed:20118373, PubMed:21409592). Agroclavine dehydrogenase easG then mediates the conversion of chanoclavine-I aldehyde to agroclavine via a non-enzymatic adduct reaction: the substrate is an iminium intermediate that is formed spontaneously from chanoclavine-I aldehyde in the presence of glutathione (PubMed:20735127, PubMed:21494745). The presence of easA is not required to complete this reaction (PubMed:21494745). Further conversion of agroclavine to paspalic acid is a two-step process involving oxidation of agroclavine to elymoclavine and of elymoclavine to paspalic acid, the second step being performed by the elymoclavine oxidase cloA (PubMed:16538694, PubMed:17720822). Paspalic acid is then further converted to D-lysergic acid (PubMed:15904941). Ergopeptines are assembled from D-lysergic acid and three different amino acids by the D-lysergyl-peptide-synthetases composed each of a monomudular and a trimodular nonribosomal peptide synthetase subunit (PubMed:14700635, PubMed:15904941). LpsB and lpsC encode the monomodular subunits responsible for D-lysergic acid activation and incorporation into the ergopeptine backbone (PubMed:14700635). LpsA1 and A2 subunits encode the trimodular nonribosomal peptide synthetase assembling the tripeptide portion of ergopeptines (PubMed:14700635). LpsA1 is responsible for formation of the major ergopeptine, ergotamine, and lpsA2 for alpha-ergocryptine, the minor ergopeptine of the total alkaloid mixture elaborated by C.purpurea (PubMed:17560817, PubMed:19139103). D-lysergyl-tripeptides are assembled by the nonribosomal peptide synthetases and released as N-(D-lysergyl-aminoacyl)-lactams (PubMed:24361048). Cyclolization of the D-lysergyl-tripeptides is performed by the Fe(2+)/2-ketoglutarate-dependent dioxygenase easH which introduces a hydroxyl group into N-(D-lysergyl-aminoacyl)-lactam at alpha-C of the aminoacyl residue followed by spontaneous condensation with the terminal lactam carbonyl group (PubMed:24361048).</text>
</comment>
<comment type="similarity">
    <text evidence="17">Belongs to the NADH:flavin oxidoreductase/NADH oxidase family.</text>
</comment>
<comment type="caution">
    <text evidence="17">In contrast to other members of the family, lacks the conserved Tyr active site at position 176 which is replaced by a Phe residue.</text>
</comment>
<dbReference type="EMBL" id="JN186799">
    <property type="protein sequence ID" value="AET79178.1"/>
    <property type="molecule type" value="Genomic_DNA"/>
</dbReference>
<dbReference type="EMBL" id="CAGA01000020">
    <property type="protein sequence ID" value="CCE30236.1"/>
    <property type="molecule type" value="Genomic_DNA"/>
</dbReference>
<dbReference type="SMR" id="M1W0Y0"/>
<dbReference type="STRING" id="1111077.M1W0Y0"/>
<dbReference type="VEuPathDB" id="FungiDB:CPUR_04084"/>
<dbReference type="eggNOG" id="KOG0134">
    <property type="taxonomic scope" value="Eukaryota"/>
</dbReference>
<dbReference type="HOGENOM" id="CLU_012153_0_0_1"/>
<dbReference type="OrthoDB" id="276546at2759"/>
<dbReference type="PhylomeDB" id="M1W0Y0"/>
<dbReference type="Proteomes" id="UP000016801">
    <property type="component" value="Unassembled WGS sequence"/>
</dbReference>
<dbReference type="GO" id="GO:0010181">
    <property type="term" value="F:FMN binding"/>
    <property type="evidence" value="ECO:0007669"/>
    <property type="project" value="InterPro"/>
</dbReference>
<dbReference type="GO" id="GO:0003959">
    <property type="term" value="F:NADPH dehydrogenase activity"/>
    <property type="evidence" value="ECO:0007669"/>
    <property type="project" value="TreeGrafter"/>
</dbReference>
<dbReference type="CDD" id="cd02933">
    <property type="entry name" value="OYE_like_FMN"/>
    <property type="match status" value="1"/>
</dbReference>
<dbReference type="FunFam" id="3.20.20.70:FF:000138">
    <property type="entry name" value="NADPH dehydrogenase 1"/>
    <property type="match status" value="1"/>
</dbReference>
<dbReference type="Gene3D" id="3.20.20.70">
    <property type="entry name" value="Aldolase class I"/>
    <property type="match status" value="1"/>
</dbReference>
<dbReference type="InterPro" id="IPR013785">
    <property type="entry name" value="Aldolase_TIM"/>
</dbReference>
<dbReference type="InterPro" id="IPR001155">
    <property type="entry name" value="OxRdtase_FMN_N"/>
</dbReference>
<dbReference type="InterPro" id="IPR045247">
    <property type="entry name" value="Oye-like"/>
</dbReference>
<dbReference type="PANTHER" id="PTHR22893">
    <property type="entry name" value="NADH OXIDOREDUCTASE-RELATED"/>
    <property type="match status" value="1"/>
</dbReference>
<dbReference type="PANTHER" id="PTHR22893:SF91">
    <property type="entry name" value="NADPH DEHYDROGENASE 2-RELATED"/>
    <property type="match status" value="1"/>
</dbReference>
<dbReference type="Pfam" id="PF00724">
    <property type="entry name" value="Oxidored_FMN"/>
    <property type="match status" value="1"/>
</dbReference>
<dbReference type="SUPFAM" id="SSF51395">
    <property type="entry name" value="FMN-linked oxidoreductases"/>
    <property type="match status" value="1"/>
</dbReference>
<name>EASA_CLAP2</name>
<keyword id="KW-0285">Flavoprotein</keyword>
<keyword id="KW-0288">FMN</keyword>
<keyword id="KW-1185">Reference proteome</keyword>
<feature type="chain" id="PRO_0000439118" description="Probable inactive dehydrogenase easA">
    <location>
        <begin position="1"/>
        <end position="380"/>
    </location>
</feature>
<feature type="binding site" evidence="2">
    <location>
        <begin position="25"/>
        <end position="27"/>
    </location>
    <ligand>
        <name>FMN</name>
        <dbReference type="ChEBI" id="CHEBI:58210"/>
    </ligand>
</feature>
<feature type="binding site" evidence="2">
    <location>
        <position position="60"/>
    </location>
    <ligand>
        <name>FMN</name>
        <dbReference type="ChEBI" id="CHEBI:58210"/>
    </ligand>
</feature>
<feature type="binding site" evidence="2">
    <location>
        <position position="102"/>
    </location>
    <ligand>
        <name>FMN</name>
        <dbReference type="ChEBI" id="CHEBI:58210"/>
    </ligand>
</feature>
<feature type="binding site" evidence="2">
    <location>
        <position position="171"/>
    </location>
    <ligand>
        <name>FMN</name>
        <dbReference type="ChEBI" id="CHEBI:58210"/>
    </ligand>
</feature>
<feature type="binding site" evidence="1">
    <location>
        <position position="171"/>
    </location>
    <ligand>
        <name>substrate</name>
    </ligand>
</feature>
<feature type="binding site" evidence="1">
    <location>
        <position position="174"/>
    </location>
    <ligand>
        <name>substrate</name>
    </ligand>
</feature>
<feature type="binding site" evidence="2">
    <location>
        <position position="223"/>
    </location>
    <ligand>
        <name>FMN</name>
        <dbReference type="ChEBI" id="CHEBI:58210"/>
    </ligand>
</feature>
<feature type="binding site" evidence="2">
    <location>
        <position position="299"/>
    </location>
    <ligand>
        <name>FMN</name>
        <dbReference type="ChEBI" id="CHEBI:58210"/>
    </ligand>
</feature>
<feature type="binding site" evidence="2">
    <location>
        <begin position="324"/>
        <end position="325"/>
    </location>
    <ligand>
        <name>FMN</name>
        <dbReference type="ChEBI" id="CHEBI:58210"/>
    </ligand>
</feature>
<feature type="binding site" evidence="1">
    <location>
        <position position="325"/>
    </location>
    <ligand>
        <name>FMN</name>
        <dbReference type="ChEBI" id="CHEBI:58210"/>
    </ligand>
</feature>
<feature type="binding site" evidence="1">
    <location>
        <position position="352"/>
    </location>
    <ligand>
        <name>substrate</name>
    </ligand>
</feature>
<organism>
    <name type="scientific">Claviceps purpurea (strain 20.1)</name>
    <name type="common">Ergot fungus</name>
    <name type="synonym">Sphacelia segetum</name>
    <dbReference type="NCBI Taxonomy" id="1111077"/>
    <lineage>
        <taxon>Eukaryota</taxon>
        <taxon>Fungi</taxon>
        <taxon>Dikarya</taxon>
        <taxon>Ascomycota</taxon>
        <taxon>Pezizomycotina</taxon>
        <taxon>Sordariomycetes</taxon>
        <taxon>Hypocreomycetidae</taxon>
        <taxon>Hypocreales</taxon>
        <taxon>Clavicipitaceae</taxon>
        <taxon>Claviceps</taxon>
    </lineage>
</organism>
<accession>M1W0Y0</accession>
<accession>G8GV60</accession>